<sequence>MAKKSSVEKNNHRKDLVKRFAEKRKALLAIANDESREMEERFEARLKLAELPRNSSATRIRNRCEMTGRPRAYYRKLGISRVALRELGNRGLIPGLVKSSW</sequence>
<organism>
    <name type="scientific">Methylorubrum extorquens (strain PA1)</name>
    <name type="common">Methylobacterium extorquens</name>
    <dbReference type="NCBI Taxonomy" id="419610"/>
    <lineage>
        <taxon>Bacteria</taxon>
        <taxon>Pseudomonadati</taxon>
        <taxon>Pseudomonadota</taxon>
        <taxon>Alphaproteobacteria</taxon>
        <taxon>Hyphomicrobiales</taxon>
        <taxon>Methylobacteriaceae</taxon>
        <taxon>Methylorubrum</taxon>
    </lineage>
</organism>
<keyword id="KW-0687">Ribonucleoprotein</keyword>
<keyword id="KW-0689">Ribosomal protein</keyword>
<keyword id="KW-0694">RNA-binding</keyword>
<keyword id="KW-0699">rRNA-binding</keyword>
<evidence type="ECO:0000255" key="1">
    <source>
        <dbReference type="HAMAP-Rule" id="MF_00537"/>
    </source>
</evidence>
<evidence type="ECO:0000305" key="2"/>
<dbReference type="EMBL" id="CP000908">
    <property type="protein sequence ID" value="ABY30583.1"/>
    <property type="molecule type" value="Genomic_DNA"/>
</dbReference>
<dbReference type="RefSeq" id="WP_003597141.1">
    <property type="nucleotide sequence ID" value="NC_010172.1"/>
</dbReference>
<dbReference type="SMR" id="A9W4S7"/>
<dbReference type="GeneID" id="72989876"/>
<dbReference type="KEGG" id="mex:Mext_2188"/>
<dbReference type="eggNOG" id="COG0199">
    <property type="taxonomic scope" value="Bacteria"/>
</dbReference>
<dbReference type="HOGENOM" id="CLU_139869_0_1_5"/>
<dbReference type="BioCyc" id="MEXT419610:MEXT_RS11045-MONOMER"/>
<dbReference type="GO" id="GO:0005737">
    <property type="term" value="C:cytoplasm"/>
    <property type="evidence" value="ECO:0007669"/>
    <property type="project" value="UniProtKB-ARBA"/>
</dbReference>
<dbReference type="GO" id="GO:0015935">
    <property type="term" value="C:small ribosomal subunit"/>
    <property type="evidence" value="ECO:0007669"/>
    <property type="project" value="TreeGrafter"/>
</dbReference>
<dbReference type="GO" id="GO:0019843">
    <property type="term" value="F:rRNA binding"/>
    <property type="evidence" value="ECO:0007669"/>
    <property type="project" value="UniProtKB-UniRule"/>
</dbReference>
<dbReference type="GO" id="GO:0003735">
    <property type="term" value="F:structural constituent of ribosome"/>
    <property type="evidence" value="ECO:0007669"/>
    <property type="project" value="InterPro"/>
</dbReference>
<dbReference type="GO" id="GO:0006412">
    <property type="term" value="P:translation"/>
    <property type="evidence" value="ECO:0007669"/>
    <property type="project" value="UniProtKB-UniRule"/>
</dbReference>
<dbReference type="FunFam" id="1.10.287.1480:FF:000001">
    <property type="entry name" value="30S ribosomal protein S14"/>
    <property type="match status" value="1"/>
</dbReference>
<dbReference type="Gene3D" id="1.10.287.1480">
    <property type="match status" value="1"/>
</dbReference>
<dbReference type="HAMAP" id="MF_00537">
    <property type="entry name" value="Ribosomal_uS14_1"/>
    <property type="match status" value="1"/>
</dbReference>
<dbReference type="InterPro" id="IPR001209">
    <property type="entry name" value="Ribosomal_uS14"/>
</dbReference>
<dbReference type="InterPro" id="IPR023036">
    <property type="entry name" value="Ribosomal_uS14_bac/plastid"/>
</dbReference>
<dbReference type="InterPro" id="IPR018271">
    <property type="entry name" value="Ribosomal_uS14_CS"/>
</dbReference>
<dbReference type="NCBIfam" id="NF006477">
    <property type="entry name" value="PRK08881.1"/>
    <property type="match status" value="1"/>
</dbReference>
<dbReference type="PANTHER" id="PTHR19836">
    <property type="entry name" value="30S RIBOSOMAL PROTEIN S14"/>
    <property type="match status" value="1"/>
</dbReference>
<dbReference type="PANTHER" id="PTHR19836:SF19">
    <property type="entry name" value="SMALL RIBOSOMAL SUBUNIT PROTEIN US14M"/>
    <property type="match status" value="1"/>
</dbReference>
<dbReference type="Pfam" id="PF00253">
    <property type="entry name" value="Ribosomal_S14"/>
    <property type="match status" value="1"/>
</dbReference>
<dbReference type="SUPFAM" id="SSF57716">
    <property type="entry name" value="Glucocorticoid receptor-like (DNA-binding domain)"/>
    <property type="match status" value="1"/>
</dbReference>
<dbReference type="PROSITE" id="PS00527">
    <property type="entry name" value="RIBOSOMAL_S14"/>
    <property type="match status" value="1"/>
</dbReference>
<name>RS14_METEP</name>
<comment type="function">
    <text evidence="1">Binds 16S rRNA, required for the assembly of 30S particles and may also be responsible for determining the conformation of the 16S rRNA at the A site.</text>
</comment>
<comment type="subunit">
    <text evidence="1">Part of the 30S ribosomal subunit. Contacts proteins S3 and S10.</text>
</comment>
<comment type="similarity">
    <text evidence="1">Belongs to the universal ribosomal protein uS14 family.</text>
</comment>
<accession>A9W4S7</accession>
<gene>
    <name evidence="1" type="primary">rpsN</name>
    <name type="ordered locus">Mext_2188</name>
</gene>
<proteinExistence type="inferred from homology"/>
<feature type="chain" id="PRO_1000128445" description="Small ribosomal subunit protein uS14">
    <location>
        <begin position="1"/>
        <end position="101"/>
    </location>
</feature>
<reference key="1">
    <citation type="submission" date="2007-12" db="EMBL/GenBank/DDBJ databases">
        <title>Complete sequence of Methylobacterium extorquens PA1.</title>
        <authorList>
            <consortium name="US DOE Joint Genome Institute"/>
            <person name="Copeland A."/>
            <person name="Lucas S."/>
            <person name="Lapidus A."/>
            <person name="Barry K."/>
            <person name="Glavina del Rio T."/>
            <person name="Dalin E."/>
            <person name="Tice H."/>
            <person name="Pitluck S."/>
            <person name="Saunders E."/>
            <person name="Brettin T."/>
            <person name="Bruce D."/>
            <person name="Detter J.C."/>
            <person name="Han C."/>
            <person name="Schmutz J."/>
            <person name="Larimer F."/>
            <person name="Land M."/>
            <person name="Hauser L."/>
            <person name="Kyrpides N."/>
            <person name="Kim E."/>
            <person name="Marx C."/>
            <person name="Richardson P."/>
        </authorList>
    </citation>
    <scope>NUCLEOTIDE SEQUENCE [LARGE SCALE GENOMIC DNA]</scope>
    <source>
        <strain>PA1</strain>
    </source>
</reference>
<protein>
    <recommendedName>
        <fullName evidence="1">Small ribosomal subunit protein uS14</fullName>
    </recommendedName>
    <alternativeName>
        <fullName evidence="2">30S ribosomal protein S14</fullName>
    </alternativeName>
</protein>